<evidence type="ECO:0000250" key="1">
    <source>
        <dbReference type="UniProtKB" id="Q9NRW4"/>
    </source>
</evidence>
<evidence type="ECO:0000255" key="2">
    <source>
        <dbReference type="PROSITE-ProRule" id="PRU00160"/>
    </source>
</evidence>
<evidence type="ECO:0000269" key="3">
    <source>
    </source>
</evidence>
<evidence type="ECO:0000303" key="4">
    <source>
    </source>
</evidence>
<evidence type="ECO:0000303" key="5">
    <source>
    </source>
</evidence>
<evidence type="ECO:0000305" key="6"/>
<evidence type="ECO:0000305" key="7">
    <source>
    </source>
</evidence>
<evidence type="ECO:0000305" key="8">
    <source>
    </source>
</evidence>
<protein>
    <recommendedName>
        <fullName evidence="1">Dual specificity protein phosphatase 22</fullName>
        <ecNumber evidence="1">3.1.3.16</ecNumber>
        <ecNumber evidence="1">3.1.3.48</ecNumber>
    </recommendedName>
    <alternativeName>
        <fullName evidence="1">JNK pathway associated phosphatase</fullName>
        <shortName>JKAP</shortName>
    </alternativeName>
    <alternativeName>
        <fullName>Low molecular weight dual specificity phosphatase 2</fullName>
        <shortName>LMW-DSP2</shortName>
    </alternativeName>
</protein>
<name>DUS22_MOUSE</name>
<dbReference type="EC" id="3.1.3.16" evidence="1"/>
<dbReference type="EC" id="3.1.3.48" evidence="1"/>
<dbReference type="EMBL" id="AF237619">
    <property type="protein sequence ID" value="AAK15038.1"/>
    <property type="molecule type" value="mRNA"/>
</dbReference>
<dbReference type="EMBL" id="AK149363">
    <property type="protein sequence ID" value="BAE28836.1"/>
    <property type="molecule type" value="mRNA"/>
</dbReference>
<dbReference type="EMBL" id="AL731659">
    <property type="protein sequence ID" value="CAI24592.1"/>
    <property type="status" value="ALT_SEQ"/>
    <property type="molecule type" value="Genomic_DNA"/>
</dbReference>
<dbReference type="EMBL" id="AL731659">
    <property type="protein sequence ID" value="CAI24593.1"/>
    <property type="molecule type" value="Genomic_DNA"/>
</dbReference>
<dbReference type="EMBL" id="AL731659">
    <property type="protein sequence ID" value="CAI24594.1"/>
    <property type="molecule type" value="Genomic_DNA"/>
</dbReference>
<dbReference type="EMBL" id="BC108362">
    <property type="protein sequence ID" value="AAI08363.1"/>
    <property type="molecule type" value="mRNA"/>
</dbReference>
<dbReference type="CCDS" id="CCDS26417.1">
    <molecule id="Q99N11-1"/>
</dbReference>
<dbReference type="CCDS" id="CCDS26418.1">
    <molecule id="Q99N11-2"/>
</dbReference>
<dbReference type="RefSeq" id="NP_001033044.1">
    <molecule id="Q99N11-2"/>
    <property type="nucleotide sequence ID" value="NM_001037955.4"/>
</dbReference>
<dbReference type="RefSeq" id="NP_598829.1">
    <molecule id="Q99N11-1"/>
    <property type="nucleotide sequence ID" value="NM_134068.4"/>
</dbReference>
<dbReference type="SMR" id="Q99N11"/>
<dbReference type="BioGRID" id="222825">
    <property type="interactions" value="2"/>
</dbReference>
<dbReference type="FunCoup" id="Q99N11">
    <property type="interactions" value="410"/>
</dbReference>
<dbReference type="STRING" id="10090.ENSMUSP00000093603"/>
<dbReference type="PhosphoSitePlus" id="Q99N11"/>
<dbReference type="jPOST" id="Q99N11"/>
<dbReference type="PaxDb" id="10090-ENSMUSP00000093603"/>
<dbReference type="PeptideAtlas" id="Q99N11"/>
<dbReference type="ProteomicsDB" id="277530">
    <molecule id="Q99N11-1"/>
</dbReference>
<dbReference type="ProteomicsDB" id="277531">
    <molecule id="Q99N11-2"/>
</dbReference>
<dbReference type="Pumba" id="Q99N11"/>
<dbReference type="Antibodypedia" id="9106">
    <property type="antibodies" value="310 antibodies from 32 providers"/>
</dbReference>
<dbReference type="DNASU" id="105352"/>
<dbReference type="Ensembl" id="ENSMUST00000091672.13">
    <molecule id="Q99N11-1"/>
    <property type="protein sequence ID" value="ENSMUSP00000089260.7"/>
    <property type="gene ID" value="ENSMUSG00000069255.14"/>
</dbReference>
<dbReference type="Ensembl" id="ENSMUST00000095914.7">
    <molecule id="Q99N11-2"/>
    <property type="protein sequence ID" value="ENSMUSP00000093603.6"/>
    <property type="gene ID" value="ENSMUSG00000069255.14"/>
</dbReference>
<dbReference type="GeneID" id="105352"/>
<dbReference type="KEGG" id="mmu:105352"/>
<dbReference type="UCSC" id="uc007pyx.2">
    <molecule id="Q99N11-2"/>
    <property type="organism name" value="mouse"/>
</dbReference>
<dbReference type="UCSC" id="uc007pyy.2">
    <molecule id="Q99N11-1"/>
    <property type="organism name" value="mouse"/>
</dbReference>
<dbReference type="AGR" id="MGI:1915926"/>
<dbReference type="CTD" id="56940"/>
<dbReference type="MGI" id="MGI:1915926">
    <property type="gene designation" value="Dusp22"/>
</dbReference>
<dbReference type="VEuPathDB" id="HostDB:ENSMUSG00000069255"/>
<dbReference type="eggNOG" id="KOG1716">
    <property type="taxonomic scope" value="Eukaryota"/>
</dbReference>
<dbReference type="GeneTree" id="ENSGT00940000157153"/>
<dbReference type="HOGENOM" id="CLU_027074_5_1_1"/>
<dbReference type="InParanoid" id="Q99N11"/>
<dbReference type="OMA" id="CAYLMWK"/>
<dbReference type="OrthoDB" id="9464at9989"/>
<dbReference type="PhylomeDB" id="Q99N11"/>
<dbReference type="TreeFam" id="TF105126"/>
<dbReference type="BioGRID-ORCS" id="105352">
    <property type="hits" value="1 hit in 78 CRISPR screens"/>
</dbReference>
<dbReference type="PRO" id="PR:Q99N11"/>
<dbReference type="Proteomes" id="UP000000589">
    <property type="component" value="Chromosome 13"/>
</dbReference>
<dbReference type="RNAct" id="Q99N11">
    <property type="molecule type" value="protein"/>
</dbReference>
<dbReference type="Bgee" id="ENSMUSG00000069255">
    <property type="expression patterns" value="Expressed in lip and 257 other cell types or tissues"/>
</dbReference>
<dbReference type="ExpressionAtlas" id="Q99N11">
    <property type="expression patterns" value="baseline and differential"/>
</dbReference>
<dbReference type="GO" id="GO:0005737">
    <property type="term" value="C:cytoplasm"/>
    <property type="evidence" value="ECO:0007669"/>
    <property type="project" value="UniProtKB-SubCell"/>
</dbReference>
<dbReference type="GO" id="GO:0031941">
    <property type="term" value="C:filamentous actin"/>
    <property type="evidence" value="ECO:0007669"/>
    <property type="project" value="Ensembl"/>
</dbReference>
<dbReference type="GO" id="GO:0061851">
    <property type="term" value="C:leading edge of lamellipodium"/>
    <property type="evidence" value="ECO:0007669"/>
    <property type="project" value="Ensembl"/>
</dbReference>
<dbReference type="GO" id="GO:0005886">
    <property type="term" value="C:plasma membrane"/>
    <property type="evidence" value="ECO:0007669"/>
    <property type="project" value="Ensembl"/>
</dbReference>
<dbReference type="GO" id="GO:0004726">
    <property type="term" value="F:non-membrane spanning protein tyrosine phosphatase activity"/>
    <property type="evidence" value="ECO:0007669"/>
    <property type="project" value="Ensembl"/>
</dbReference>
<dbReference type="GO" id="GO:0004722">
    <property type="term" value="F:protein serine/threonine phosphatase activity"/>
    <property type="evidence" value="ECO:0007669"/>
    <property type="project" value="UniProtKB-EC"/>
</dbReference>
<dbReference type="GO" id="GO:1990782">
    <property type="term" value="F:protein tyrosine kinase binding"/>
    <property type="evidence" value="ECO:0000353"/>
    <property type="project" value="ARUK-UCL"/>
</dbReference>
<dbReference type="GO" id="GO:0030292">
    <property type="term" value="F:protein tyrosine kinase inhibitor activity"/>
    <property type="evidence" value="ECO:0007669"/>
    <property type="project" value="Ensembl"/>
</dbReference>
<dbReference type="GO" id="GO:0004725">
    <property type="term" value="F:protein tyrosine phosphatase activity"/>
    <property type="evidence" value="ECO:0000314"/>
    <property type="project" value="MGI"/>
</dbReference>
<dbReference type="GO" id="GO:0008138">
    <property type="term" value="F:protein tyrosine/serine/threonine phosphatase activity"/>
    <property type="evidence" value="ECO:0000266"/>
    <property type="project" value="MGI"/>
</dbReference>
<dbReference type="GO" id="GO:0071364">
    <property type="term" value="P:cellular response to epidermal growth factor stimulus"/>
    <property type="evidence" value="ECO:0007669"/>
    <property type="project" value="Ensembl"/>
</dbReference>
<dbReference type="GO" id="GO:0002376">
    <property type="term" value="P:immune system process"/>
    <property type="evidence" value="ECO:0007669"/>
    <property type="project" value="UniProtKB-KW"/>
</dbReference>
<dbReference type="GO" id="GO:0035556">
    <property type="term" value="P:intracellular signal transduction"/>
    <property type="evidence" value="ECO:0007669"/>
    <property type="project" value="Ensembl"/>
</dbReference>
<dbReference type="GO" id="GO:0030336">
    <property type="term" value="P:negative regulation of cell migration"/>
    <property type="evidence" value="ECO:0007669"/>
    <property type="project" value="Ensembl"/>
</dbReference>
<dbReference type="GO" id="GO:0051895">
    <property type="term" value="P:negative regulation of focal adhesion assembly"/>
    <property type="evidence" value="ECO:0007669"/>
    <property type="project" value="Ensembl"/>
</dbReference>
<dbReference type="GO" id="GO:0050868">
    <property type="term" value="P:negative regulation of T cell activation"/>
    <property type="evidence" value="ECO:0000315"/>
    <property type="project" value="MGI"/>
</dbReference>
<dbReference type="GO" id="GO:0002710">
    <property type="term" value="P:negative regulation of T cell mediated immunity"/>
    <property type="evidence" value="ECO:0000315"/>
    <property type="project" value="MGI"/>
</dbReference>
<dbReference type="GO" id="GO:0050860">
    <property type="term" value="P:negative regulation of T cell receptor signaling pathway"/>
    <property type="evidence" value="ECO:0000315"/>
    <property type="project" value="MGI"/>
</dbReference>
<dbReference type="GO" id="GO:0000122">
    <property type="term" value="P:negative regulation of transcription by RNA polymerase II"/>
    <property type="evidence" value="ECO:0000266"/>
    <property type="project" value="MGI"/>
</dbReference>
<dbReference type="GO" id="GO:0046330">
    <property type="term" value="P:positive regulation of JNK cascade"/>
    <property type="evidence" value="ECO:0000314"/>
    <property type="project" value="MGI"/>
</dbReference>
<dbReference type="GO" id="GO:0042127">
    <property type="term" value="P:regulation of cell population proliferation"/>
    <property type="evidence" value="ECO:0000315"/>
    <property type="project" value="MGI"/>
</dbReference>
<dbReference type="GO" id="GO:0007179">
    <property type="term" value="P:transforming growth factor beta receptor signaling pathway"/>
    <property type="evidence" value="ECO:0000315"/>
    <property type="project" value="MGI"/>
</dbReference>
<dbReference type="CDD" id="cd14581">
    <property type="entry name" value="DUSP22"/>
    <property type="match status" value="1"/>
</dbReference>
<dbReference type="FunFam" id="3.90.190.10:FF:000048">
    <property type="entry name" value="dual specificity protein phosphatase 22 isoform X1"/>
    <property type="match status" value="1"/>
</dbReference>
<dbReference type="Gene3D" id="3.90.190.10">
    <property type="entry name" value="Protein tyrosine phosphatase superfamily"/>
    <property type="match status" value="1"/>
</dbReference>
<dbReference type="InterPro" id="IPR000340">
    <property type="entry name" value="Dual-sp_phosphatase_cat-dom"/>
</dbReference>
<dbReference type="InterPro" id="IPR029021">
    <property type="entry name" value="Prot-tyrosine_phosphatase-like"/>
</dbReference>
<dbReference type="InterPro" id="IPR003595">
    <property type="entry name" value="Tyr_Pase_cat"/>
</dbReference>
<dbReference type="InterPro" id="IPR000387">
    <property type="entry name" value="Tyr_Pase_dom"/>
</dbReference>
<dbReference type="InterPro" id="IPR020422">
    <property type="entry name" value="TYR_PHOSPHATASE_DUAL_dom"/>
</dbReference>
<dbReference type="PANTHER" id="PTHR45948:SF3">
    <property type="entry name" value="DUAL SPECIFICITY PROTEIN PHOSPHATASE 22"/>
    <property type="match status" value="1"/>
</dbReference>
<dbReference type="PANTHER" id="PTHR45948">
    <property type="entry name" value="DUAL SPECIFICITY PROTEIN PHOSPHATASE DDB_G0269404-RELATED"/>
    <property type="match status" value="1"/>
</dbReference>
<dbReference type="Pfam" id="PF00782">
    <property type="entry name" value="DSPc"/>
    <property type="match status" value="1"/>
</dbReference>
<dbReference type="PRINTS" id="PR01908">
    <property type="entry name" value="ADSPHPHTASE"/>
</dbReference>
<dbReference type="SMART" id="SM00195">
    <property type="entry name" value="DSPc"/>
    <property type="match status" value="1"/>
</dbReference>
<dbReference type="SMART" id="SM00404">
    <property type="entry name" value="PTPc_motif"/>
    <property type="match status" value="1"/>
</dbReference>
<dbReference type="SUPFAM" id="SSF52799">
    <property type="entry name" value="(Phosphotyrosine protein) phosphatases II"/>
    <property type="match status" value="1"/>
</dbReference>
<dbReference type="PROSITE" id="PS50056">
    <property type="entry name" value="TYR_PHOSPHATASE_2"/>
    <property type="match status" value="1"/>
</dbReference>
<dbReference type="PROSITE" id="PS50054">
    <property type="entry name" value="TYR_PHOSPHATASE_DUAL"/>
    <property type="match status" value="1"/>
</dbReference>
<comment type="function">
    <text evidence="1 3">Dual specificity phosphatase; can dephosphorylate both phosphotyrosine and phosphoserine or phosphothreonine residues (By similarity). Activates the JNK signaling pathway (By similarity). Inhibits T-cell receptor signaling and T-cell mediated immune responses, acting, at least in part, by inducing degradation of E3 ubiquitin ligase UBR2 (By similarity). Dephosphorylates and thereby induces 'Lys-48'-linked ubiquitination of UBR2, leading to proteasomal degradation of UBR2 (By similarity). Dephosphorylates and thereby inactivates tyrosine kinase LCK (By similarity). Inhibits UBR2-mediated 'Lys-63'-linked ubiquitination of LCK (By similarity). May play a role in B-cell receptor (BCR) signaling and B-cell function (PubMed:24714587).</text>
</comment>
<comment type="catalytic activity">
    <reaction evidence="1">
        <text>O-phospho-L-tyrosyl-[protein] + H2O = L-tyrosyl-[protein] + phosphate</text>
        <dbReference type="Rhea" id="RHEA:10684"/>
        <dbReference type="Rhea" id="RHEA-COMP:10136"/>
        <dbReference type="Rhea" id="RHEA-COMP:20101"/>
        <dbReference type="ChEBI" id="CHEBI:15377"/>
        <dbReference type="ChEBI" id="CHEBI:43474"/>
        <dbReference type="ChEBI" id="CHEBI:46858"/>
        <dbReference type="ChEBI" id="CHEBI:61978"/>
        <dbReference type="EC" id="3.1.3.48"/>
    </reaction>
</comment>
<comment type="catalytic activity">
    <reaction evidence="1">
        <text>O-phospho-L-seryl-[protein] + H2O = L-seryl-[protein] + phosphate</text>
        <dbReference type="Rhea" id="RHEA:20629"/>
        <dbReference type="Rhea" id="RHEA-COMP:9863"/>
        <dbReference type="Rhea" id="RHEA-COMP:11604"/>
        <dbReference type="ChEBI" id="CHEBI:15377"/>
        <dbReference type="ChEBI" id="CHEBI:29999"/>
        <dbReference type="ChEBI" id="CHEBI:43474"/>
        <dbReference type="ChEBI" id="CHEBI:83421"/>
        <dbReference type="EC" id="3.1.3.16"/>
    </reaction>
</comment>
<comment type="catalytic activity">
    <reaction evidence="1">
        <text>O-phospho-L-threonyl-[protein] + H2O = L-threonyl-[protein] + phosphate</text>
        <dbReference type="Rhea" id="RHEA:47004"/>
        <dbReference type="Rhea" id="RHEA-COMP:11060"/>
        <dbReference type="Rhea" id="RHEA-COMP:11605"/>
        <dbReference type="ChEBI" id="CHEBI:15377"/>
        <dbReference type="ChEBI" id="CHEBI:30013"/>
        <dbReference type="ChEBI" id="CHEBI:43474"/>
        <dbReference type="ChEBI" id="CHEBI:61977"/>
        <dbReference type="EC" id="3.1.3.16"/>
    </reaction>
</comment>
<comment type="subunit">
    <text evidence="1">Monomer (By similarity). Interacts with LCK; the interaction is direct (By similarity). Interacts with UBR2; the interaction is direct (By similarity).</text>
</comment>
<comment type="subcellular location">
    <subcellularLocation>
        <location evidence="1">Cytoplasm</location>
    </subcellularLocation>
</comment>
<comment type="alternative products">
    <event type="alternative splicing"/>
    <isoform>
        <id>Q99N11-1</id>
        <name>1</name>
        <sequence type="displayed"/>
    </isoform>
    <isoform>
        <id>Q99N11-2</id>
        <name>2</name>
        <sequence type="described" ref="VSP_019615"/>
    </isoform>
</comment>
<comment type="PTM">
    <text evidence="1">Myristoylation regulates subcellular location, and is necessary for activation of JNK.</text>
</comment>
<comment type="disruption phenotype">
    <text evidence="3">Enhances T-cell mediated immune response (PubMed:24714587). Increases susceptibility to experimental autoimmune encephalomyelitis (PubMed:24714587). Aged animals develop autoimmunity and inflammatory phenotypes, including raised inflammatory cytokines, anti-nuclear and anti-DNA antibodies, renal damage and splenomegaly (PubMed:24714587).</text>
</comment>
<comment type="similarity">
    <text evidence="6">Belongs to the protein-tyrosine phosphatase family. Non-receptor class dual specificity subfamily.</text>
</comment>
<comment type="caution">
    <text evidence="7 8">The publication has been retracted as they duplicated images.</text>
</comment>
<comment type="sequence caution" evidence="6">
    <conflict type="erroneous gene model prediction">
        <sequence resource="EMBL-CDS" id="CAI24592"/>
    </conflict>
</comment>
<feature type="initiator methionine" description="Removed">
    <location>
        <position position="1"/>
    </location>
</feature>
<feature type="chain" id="PRO_0000244752" description="Dual specificity protein phosphatase 22">
    <location>
        <begin position="2"/>
        <end position="184"/>
    </location>
</feature>
<feature type="domain" description="Tyrosine-protein phosphatase" evidence="2">
    <location>
        <begin position="4"/>
        <end position="144"/>
    </location>
</feature>
<feature type="active site" description="Phosphocysteine intermediate" evidence="2">
    <location>
        <position position="88"/>
    </location>
</feature>
<feature type="binding site" evidence="1">
    <location>
        <position position="89"/>
    </location>
    <ligand>
        <name>a protein</name>
        <dbReference type="ChEBI" id="CHEBI:16541"/>
    </ligand>
    <ligandPart>
        <name>L-tyrosine-phosphate residue</name>
        <dbReference type="ChEBI" id="CHEBI:61978"/>
    </ligandPart>
</feature>
<feature type="binding site" evidence="1">
    <location>
        <position position="90"/>
    </location>
    <ligand>
        <name>a protein</name>
        <dbReference type="ChEBI" id="CHEBI:16541"/>
    </ligand>
    <ligandPart>
        <name>L-tyrosine-phosphate residue</name>
        <dbReference type="ChEBI" id="CHEBI:61978"/>
    </ligandPart>
</feature>
<feature type="binding site" evidence="1">
    <location>
        <position position="92"/>
    </location>
    <ligand>
        <name>a protein</name>
        <dbReference type="ChEBI" id="CHEBI:16541"/>
    </ligand>
    <ligandPart>
        <name>L-tyrosine-phosphate residue</name>
        <dbReference type="ChEBI" id="CHEBI:61978"/>
    </ligandPart>
</feature>
<feature type="binding site" evidence="1">
    <location>
        <position position="93"/>
    </location>
    <ligand>
        <name>a protein</name>
        <dbReference type="ChEBI" id="CHEBI:16541"/>
    </ligand>
    <ligandPart>
        <name>L-tyrosine-phosphate residue</name>
        <dbReference type="ChEBI" id="CHEBI:61978"/>
    </ligandPart>
</feature>
<feature type="binding site" evidence="1">
    <location>
        <position position="94"/>
    </location>
    <ligand>
        <name>a protein</name>
        <dbReference type="ChEBI" id="CHEBI:16541"/>
    </ligand>
    <ligandPart>
        <name>L-tyrosine-phosphate residue</name>
        <dbReference type="ChEBI" id="CHEBI:61978"/>
    </ligandPart>
</feature>
<feature type="lipid moiety-binding region" description="N-myristoyl glycine" evidence="1">
    <location>
        <position position="2"/>
    </location>
</feature>
<feature type="splice variant" id="VSP_019615" description="In isoform 2." evidence="4 5">
    <original>AAPGILKYWAFLRRL</original>
    <variation>GKYKEQGRMEPRPSSRRWSSFSTLPPLTYNNYTTET</variation>
    <location>
        <begin position="170"/>
        <end position="184"/>
    </location>
</feature>
<accession>Q99N11</accession>
<accession>Q5SQN9</accession>
<accession>Q5SQP0</accession>
<proteinExistence type="evidence at protein level"/>
<gene>
    <name type="primary">Dusp22</name>
</gene>
<reference key="1">
    <citation type="journal article" date="2005" name="Science">
        <title>The transcriptional landscape of the mammalian genome.</title>
        <authorList>
            <person name="Carninci P."/>
            <person name="Kasukawa T."/>
            <person name="Katayama S."/>
            <person name="Gough J."/>
            <person name="Frith M.C."/>
            <person name="Maeda N."/>
            <person name="Oyama R."/>
            <person name="Ravasi T."/>
            <person name="Lenhard B."/>
            <person name="Wells C."/>
            <person name="Kodzius R."/>
            <person name="Shimokawa K."/>
            <person name="Bajic V.B."/>
            <person name="Brenner S.E."/>
            <person name="Batalov S."/>
            <person name="Forrest A.R."/>
            <person name="Zavolan M."/>
            <person name="Davis M.J."/>
            <person name="Wilming L.G."/>
            <person name="Aidinis V."/>
            <person name="Allen J.E."/>
            <person name="Ambesi-Impiombato A."/>
            <person name="Apweiler R."/>
            <person name="Aturaliya R.N."/>
            <person name="Bailey T.L."/>
            <person name="Bansal M."/>
            <person name="Baxter L."/>
            <person name="Beisel K.W."/>
            <person name="Bersano T."/>
            <person name="Bono H."/>
            <person name="Chalk A.M."/>
            <person name="Chiu K.P."/>
            <person name="Choudhary V."/>
            <person name="Christoffels A."/>
            <person name="Clutterbuck D.R."/>
            <person name="Crowe M.L."/>
            <person name="Dalla E."/>
            <person name="Dalrymple B.P."/>
            <person name="de Bono B."/>
            <person name="Della Gatta G."/>
            <person name="di Bernardo D."/>
            <person name="Down T."/>
            <person name="Engstrom P."/>
            <person name="Fagiolini M."/>
            <person name="Faulkner G."/>
            <person name="Fletcher C.F."/>
            <person name="Fukushima T."/>
            <person name="Furuno M."/>
            <person name="Futaki S."/>
            <person name="Gariboldi M."/>
            <person name="Georgii-Hemming P."/>
            <person name="Gingeras T.R."/>
            <person name="Gojobori T."/>
            <person name="Green R.E."/>
            <person name="Gustincich S."/>
            <person name="Harbers M."/>
            <person name="Hayashi Y."/>
            <person name="Hensch T.K."/>
            <person name="Hirokawa N."/>
            <person name="Hill D."/>
            <person name="Huminiecki L."/>
            <person name="Iacono M."/>
            <person name="Ikeo K."/>
            <person name="Iwama A."/>
            <person name="Ishikawa T."/>
            <person name="Jakt M."/>
            <person name="Kanapin A."/>
            <person name="Katoh M."/>
            <person name="Kawasawa Y."/>
            <person name="Kelso J."/>
            <person name="Kitamura H."/>
            <person name="Kitano H."/>
            <person name="Kollias G."/>
            <person name="Krishnan S.P."/>
            <person name="Kruger A."/>
            <person name="Kummerfeld S.K."/>
            <person name="Kurochkin I.V."/>
            <person name="Lareau L.F."/>
            <person name="Lazarevic D."/>
            <person name="Lipovich L."/>
            <person name="Liu J."/>
            <person name="Liuni S."/>
            <person name="McWilliam S."/>
            <person name="Madan Babu M."/>
            <person name="Madera M."/>
            <person name="Marchionni L."/>
            <person name="Matsuda H."/>
            <person name="Matsuzawa S."/>
            <person name="Miki H."/>
            <person name="Mignone F."/>
            <person name="Miyake S."/>
            <person name="Morris K."/>
            <person name="Mottagui-Tabar S."/>
            <person name="Mulder N."/>
            <person name="Nakano N."/>
            <person name="Nakauchi H."/>
            <person name="Ng P."/>
            <person name="Nilsson R."/>
            <person name="Nishiguchi S."/>
            <person name="Nishikawa S."/>
            <person name="Nori F."/>
            <person name="Ohara O."/>
            <person name="Okazaki Y."/>
            <person name="Orlando V."/>
            <person name="Pang K.C."/>
            <person name="Pavan W.J."/>
            <person name="Pavesi G."/>
            <person name="Pesole G."/>
            <person name="Petrovsky N."/>
            <person name="Piazza S."/>
            <person name="Reed J."/>
            <person name="Reid J.F."/>
            <person name="Ring B.Z."/>
            <person name="Ringwald M."/>
            <person name="Rost B."/>
            <person name="Ruan Y."/>
            <person name="Salzberg S.L."/>
            <person name="Sandelin A."/>
            <person name="Schneider C."/>
            <person name="Schoenbach C."/>
            <person name="Sekiguchi K."/>
            <person name="Semple C.A."/>
            <person name="Seno S."/>
            <person name="Sessa L."/>
            <person name="Sheng Y."/>
            <person name="Shibata Y."/>
            <person name="Shimada H."/>
            <person name="Shimada K."/>
            <person name="Silva D."/>
            <person name="Sinclair B."/>
            <person name="Sperling S."/>
            <person name="Stupka E."/>
            <person name="Sugiura K."/>
            <person name="Sultana R."/>
            <person name="Takenaka Y."/>
            <person name="Taki K."/>
            <person name="Tammoja K."/>
            <person name="Tan S.L."/>
            <person name="Tang S."/>
            <person name="Taylor M.S."/>
            <person name="Tegner J."/>
            <person name="Teichmann S.A."/>
            <person name="Ueda H.R."/>
            <person name="van Nimwegen E."/>
            <person name="Verardo R."/>
            <person name="Wei C.L."/>
            <person name="Yagi K."/>
            <person name="Yamanishi H."/>
            <person name="Zabarovsky E."/>
            <person name="Zhu S."/>
            <person name="Zimmer A."/>
            <person name="Hide W."/>
            <person name="Bult C."/>
            <person name="Grimmond S.M."/>
            <person name="Teasdale R.D."/>
            <person name="Liu E.T."/>
            <person name="Brusic V."/>
            <person name="Quackenbush J."/>
            <person name="Wahlestedt C."/>
            <person name="Mattick J.S."/>
            <person name="Hume D.A."/>
            <person name="Kai C."/>
            <person name="Sasaki D."/>
            <person name="Tomaru Y."/>
            <person name="Fukuda S."/>
            <person name="Kanamori-Katayama M."/>
            <person name="Suzuki M."/>
            <person name="Aoki J."/>
            <person name="Arakawa T."/>
            <person name="Iida J."/>
            <person name="Imamura K."/>
            <person name="Itoh M."/>
            <person name="Kato T."/>
            <person name="Kawaji H."/>
            <person name="Kawagashira N."/>
            <person name="Kawashima T."/>
            <person name="Kojima M."/>
            <person name="Kondo S."/>
            <person name="Konno H."/>
            <person name="Nakano K."/>
            <person name="Ninomiya N."/>
            <person name="Nishio T."/>
            <person name="Okada M."/>
            <person name="Plessy C."/>
            <person name="Shibata K."/>
            <person name="Shiraki T."/>
            <person name="Suzuki S."/>
            <person name="Tagami M."/>
            <person name="Waki K."/>
            <person name="Watahiki A."/>
            <person name="Okamura-Oho Y."/>
            <person name="Suzuki H."/>
            <person name="Kawai J."/>
            <person name="Hayashizaki Y."/>
        </authorList>
    </citation>
    <scope>NUCLEOTIDE SEQUENCE [LARGE SCALE MRNA] (ISOFORM 2)</scope>
    <source>
        <strain>C57BL/6J</strain>
        <tissue>Retina</tissue>
    </source>
</reference>
<reference key="2">
    <citation type="journal article" date="2009" name="PLoS Biol.">
        <title>Lineage-specific biology revealed by a finished genome assembly of the mouse.</title>
        <authorList>
            <person name="Church D.M."/>
            <person name="Goodstadt L."/>
            <person name="Hillier L.W."/>
            <person name="Zody M.C."/>
            <person name="Goldstein S."/>
            <person name="She X."/>
            <person name="Bult C.J."/>
            <person name="Agarwala R."/>
            <person name="Cherry J.L."/>
            <person name="DiCuccio M."/>
            <person name="Hlavina W."/>
            <person name="Kapustin Y."/>
            <person name="Meric P."/>
            <person name="Maglott D."/>
            <person name="Birtle Z."/>
            <person name="Marques A.C."/>
            <person name="Graves T."/>
            <person name="Zhou S."/>
            <person name="Teague B."/>
            <person name="Potamousis K."/>
            <person name="Churas C."/>
            <person name="Place M."/>
            <person name="Herschleb J."/>
            <person name="Runnheim R."/>
            <person name="Forrest D."/>
            <person name="Amos-Landgraf J."/>
            <person name="Schwartz D.C."/>
            <person name="Cheng Z."/>
            <person name="Lindblad-Toh K."/>
            <person name="Eichler E.E."/>
            <person name="Ponting C.P."/>
        </authorList>
    </citation>
    <scope>NUCLEOTIDE SEQUENCE [LARGE SCALE GENOMIC DNA]</scope>
    <source>
        <strain>C57BL/6J</strain>
    </source>
</reference>
<reference key="3">
    <citation type="journal article" date="2004" name="Genome Res.">
        <title>The status, quality, and expansion of the NIH full-length cDNA project: the Mammalian Gene Collection (MGC).</title>
        <authorList>
            <consortium name="The MGC Project Team"/>
        </authorList>
    </citation>
    <scope>NUCLEOTIDE SEQUENCE [LARGE SCALE MRNA] (ISOFORM 2)</scope>
    <source>
        <strain>NMRI</strain>
        <tissue>Mammary tumor</tissue>
    </source>
</reference>
<reference key="4">
    <citation type="journal article" date="2001" name="J. Biol. Chem.">
        <title>Molecular cloning and characterization of a novel dual specificity phosphatase, LMW-DSP2, that lacks the cdc25 homology domain.</title>
        <authorList>
            <person name="Aoyama K."/>
            <person name="Nagata M."/>
            <person name="Oshima K."/>
            <person name="Matsuda T."/>
            <person name="Aoki N."/>
        </authorList>
    </citation>
    <scope>RETRACTED PAPER</scope>
    <source>
        <tissue>Testis</tissue>
    </source>
</reference>
<reference key="5">
    <citation type="journal article" date="2013" name="J. Biol. Chem.">
        <authorList>
            <person name="Aoyama K."/>
            <person name="Nagata M."/>
            <person name="Oshima K."/>
            <person name="Matsuda T."/>
            <person name="Aoki N."/>
        </authorList>
    </citation>
    <scope>RETRACTION NOTICE OF PUBMED:11346645</scope>
</reference>
<reference key="6">
    <citation type="journal article" date="2010" name="Cell">
        <title>A tissue-specific atlas of mouse protein phosphorylation and expression.</title>
        <authorList>
            <person name="Huttlin E.L."/>
            <person name="Jedrychowski M.P."/>
            <person name="Elias J.E."/>
            <person name="Goswami T."/>
            <person name="Rad R."/>
            <person name="Beausoleil S.A."/>
            <person name="Villen J."/>
            <person name="Haas W."/>
            <person name="Sowa M.E."/>
            <person name="Gygi S.P."/>
        </authorList>
    </citation>
    <scope>IDENTIFICATION BY MASS SPECTROMETRY [LARGE SCALE ANALYSIS]</scope>
    <source>
        <tissue>Brain</tissue>
        <tissue>Kidney</tissue>
        <tissue>Lung</tissue>
        <tissue>Pancreas</tissue>
        <tissue>Spleen</tissue>
        <tissue>Testis</tissue>
    </source>
</reference>
<reference evidence="6" key="7">
    <citation type="journal article" date="2014" name="Nat. Commun.">
        <title>The phosphatase JKAP/DUSP22 inhibits T-cell receptor signalling and autoimmunity by inactivating Lck.</title>
        <authorList>
            <person name="Li J.P."/>
            <person name="Yang C.Y."/>
            <person name="Chuang H.C."/>
            <person name="Lan J.L."/>
            <person name="Chen D.Y."/>
            <person name="Chen Y.M."/>
            <person name="Wang X."/>
            <person name="Chen A.J."/>
            <person name="Belmont J.W."/>
            <person name="Tan T.H."/>
        </authorList>
    </citation>
    <scope>FUNCTION</scope>
    <scope>DISRUPTION PHENOTYPE</scope>
</reference>
<organism>
    <name type="scientific">Mus musculus</name>
    <name type="common">Mouse</name>
    <dbReference type="NCBI Taxonomy" id="10090"/>
    <lineage>
        <taxon>Eukaryota</taxon>
        <taxon>Metazoa</taxon>
        <taxon>Chordata</taxon>
        <taxon>Craniata</taxon>
        <taxon>Vertebrata</taxon>
        <taxon>Euteleostomi</taxon>
        <taxon>Mammalia</taxon>
        <taxon>Eutheria</taxon>
        <taxon>Euarchontoglires</taxon>
        <taxon>Glires</taxon>
        <taxon>Rodentia</taxon>
        <taxon>Myomorpha</taxon>
        <taxon>Muroidea</taxon>
        <taxon>Muridae</taxon>
        <taxon>Murinae</taxon>
        <taxon>Mus</taxon>
        <taxon>Mus</taxon>
    </lineage>
</organism>
<keyword id="KW-0025">Alternative splicing</keyword>
<keyword id="KW-0963">Cytoplasm</keyword>
<keyword id="KW-0378">Hydrolase</keyword>
<keyword id="KW-0391">Immunity</keyword>
<keyword id="KW-0449">Lipoprotein</keyword>
<keyword id="KW-0519">Myristate</keyword>
<keyword id="KW-0904">Protein phosphatase</keyword>
<keyword id="KW-1185">Reference proteome</keyword>
<sequence>MGSGMSQILPGLYIGNFKDARDAEQLSRNKVTHILSVHDTARPMLEGVKYLCIPAADTPSQNLTRHFKESIKFIHECRLQGESCLVHCLAGVSRSVTLVIAYIMTVTDFGWEDALHTVRAGRSCANPNLGFQRQLQEFEKHEVHQYRQWLREEYGENPLRDAEEAKNILAAPGILKYWAFLRRL</sequence>